<organism>
    <name type="scientific">Synechococcus elongatus (strain ATCC 33912 / PCC 7942 / FACHB-805)</name>
    <name type="common">Anacystis nidulans R2</name>
    <dbReference type="NCBI Taxonomy" id="1140"/>
    <lineage>
        <taxon>Bacteria</taxon>
        <taxon>Bacillati</taxon>
        <taxon>Cyanobacteriota</taxon>
        <taxon>Cyanophyceae</taxon>
        <taxon>Synechococcales</taxon>
        <taxon>Synechococcaceae</taxon>
        <taxon>Synechococcus</taxon>
    </lineage>
</organism>
<accession>Q8KPQ7</accession>
<accession>Q31NZ8</accession>
<evidence type="ECO:0000250" key="1">
    <source>
        <dbReference type="UniProtKB" id="Q9KNM4"/>
    </source>
</evidence>
<evidence type="ECO:0000255" key="2">
    <source>
        <dbReference type="HAMAP-Rule" id="MF_00328"/>
    </source>
</evidence>
<evidence type="ECO:0000305" key="3"/>
<reference key="1">
    <citation type="submission" date="2002-06" db="EMBL/GenBank/DDBJ databases">
        <title>Synechococcus elongatus PCC7942 cosmid 7G3.</title>
        <authorList>
            <person name="Holtman C.K."/>
            <person name="Sandoval P."/>
            <person name="Chen Y."/>
            <person name="Socias T."/>
            <person name="Mohler B.J."/>
            <person name="McMurtry S."/>
            <person name="Gonzalez A."/>
            <person name="Salinas I."/>
            <person name="Golden S.S."/>
            <person name="Youderian P."/>
        </authorList>
    </citation>
    <scope>NUCLEOTIDE SEQUENCE [GENOMIC DNA]</scope>
</reference>
<reference key="2">
    <citation type="submission" date="2005-08" db="EMBL/GenBank/DDBJ databases">
        <title>Complete sequence of chromosome 1 of Synechococcus elongatus PCC 7942.</title>
        <authorList>
            <consortium name="US DOE Joint Genome Institute"/>
            <person name="Copeland A."/>
            <person name="Lucas S."/>
            <person name="Lapidus A."/>
            <person name="Barry K."/>
            <person name="Detter J.C."/>
            <person name="Glavina T."/>
            <person name="Hammon N."/>
            <person name="Israni S."/>
            <person name="Pitluck S."/>
            <person name="Schmutz J."/>
            <person name="Larimer F."/>
            <person name="Land M."/>
            <person name="Kyrpides N."/>
            <person name="Lykidis A."/>
            <person name="Golden S."/>
            <person name="Richardson P."/>
        </authorList>
    </citation>
    <scope>NUCLEOTIDE SEQUENCE [LARGE SCALE GENOMIC DNA]</scope>
    <source>
        <strain>ATCC 33912 / PCC 7942 / FACHB-805</strain>
    </source>
</reference>
<name>KGUA_SYNE7</name>
<sequence>MSIGRVVVLTGPSGVGKGTLLKAILSQHPEAFLSISATTRSPRPGEVDGQHYYFLSREEFQTKIAEQEFLEWAEFAGNLYGTPRSPVIEQVNLGRTVILEIELEGARQVRKTLPSARQVMLLPPSVEELERRIRERATEDEAAIARRLLQAQTEIGAAKEFDRCVINDQLDTAITALEAAIFS</sequence>
<proteinExistence type="inferred from homology"/>
<feature type="chain" id="PRO_0000170627" description="Guanylate kinase">
    <location>
        <begin position="1"/>
        <end position="183"/>
    </location>
</feature>
<feature type="domain" description="Guanylate kinase-like" evidence="2">
    <location>
        <begin position="4"/>
        <end position="182"/>
    </location>
</feature>
<feature type="binding site" evidence="2">
    <location>
        <begin position="11"/>
        <end position="18"/>
    </location>
    <ligand>
        <name>ATP</name>
        <dbReference type="ChEBI" id="CHEBI:30616"/>
    </ligand>
</feature>
<gene>
    <name evidence="2" type="primary">gmk</name>
    <name type="ordered locus">Synpcc7942_1191</name>
    <name type="ORF">sef0037</name>
</gene>
<dbReference type="EC" id="2.7.4.8" evidence="2"/>
<dbReference type="EMBL" id="AY120853">
    <property type="protein sequence ID" value="AAM82712.1"/>
    <property type="status" value="ALT_INIT"/>
    <property type="molecule type" value="Genomic_DNA"/>
</dbReference>
<dbReference type="EMBL" id="CP000100">
    <property type="protein sequence ID" value="ABB57221.1"/>
    <property type="molecule type" value="Genomic_DNA"/>
</dbReference>
<dbReference type="RefSeq" id="WP_011377908.1">
    <property type="nucleotide sequence ID" value="NZ_JACJTX010000003.1"/>
</dbReference>
<dbReference type="SMR" id="Q8KPQ7"/>
<dbReference type="STRING" id="1140.Synpcc7942_1191"/>
<dbReference type="PaxDb" id="1140-Synpcc7942_1191"/>
<dbReference type="GeneID" id="72430049"/>
<dbReference type="KEGG" id="syf:Synpcc7942_1191"/>
<dbReference type="eggNOG" id="COG0194">
    <property type="taxonomic scope" value="Bacteria"/>
</dbReference>
<dbReference type="HOGENOM" id="CLU_001715_1_2_3"/>
<dbReference type="OrthoDB" id="9808150at2"/>
<dbReference type="BioCyc" id="SYNEL:SYNPCC7942_1191-MONOMER"/>
<dbReference type="Proteomes" id="UP000889800">
    <property type="component" value="Chromosome"/>
</dbReference>
<dbReference type="GO" id="GO:0005829">
    <property type="term" value="C:cytosol"/>
    <property type="evidence" value="ECO:0007669"/>
    <property type="project" value="TreeGrafter"/>
</dbReference>
<dbReference type="GO" id="GO:0005524">
    <property type="term" value="F:ATP binding"/>
    <property type="evidence" value="ECO:0007669"/>
    <property type="project" value="UniProtKB-UniRule"/>
</dbReference>
<dbReference type="GO" id="GO:0004385">
    <property type="term" value="F:guanylate kinase activity"/>
    <property type="evidence" value="ECO:0007669"/>
    <property type="project" value="UniProtKB-UniRule"/>
</dbReference>
<dbReference type="CDD" id="cd00071">
    <property type="entry name" value="GMPK"/>
    <property type="match status" value="1"/>
</dbReference>
<dbReference type="FunFam" id="3.30.63.10:FF:000002">
    <property type="entry name" value="Guanylate kinase 1"/>
    <property type="match status" value="1"/>
</dbReference>
<dbReference type="Gene3D" id="3.30.63.10">
    <property type="entry name" value="Guanylate Kinase phosphate binding domain"/>
    <property type="match status" value="1"/>
</dbReference>
<dbReference type="Gene3D" id="3.40.50.300">
    <property type="entry name" value="P-loop containing nucleotide triphosphate hydrolases"/>
    <property type="match status" value="1"/>
</dbReference>
<dbReference type="HAMAP" id="MF_00328">
    <property type="entry name" value="Guanylate_kinase"/>
    <property type="match status" value="1"/>
</dbReference>
<dbReference type="InterPro" id="IPR008145">
    <property type="entry name" value="GK/Ca_channel_bsu"/>
</dbReference>
<dbReference type="InterPro" id="IPR008144">
    <property type="entry name" value="Guanylate_kin-like_dom"/>
</dbReference>
<dbReference type="InterPro" id="IPR017665">
    <property type="entry name" value="Guanylate_kinase"/>
</dbReference>
<dbReference type="InterPro" id="IPR020590">
    <property type="entry name" value="Guanylate_kinase_CS"/>
</dbReference>
<dbReference type="InterPro" id="IPR027417">
    <property type="entry name" value="P-loop_NTPase"/>
</dbReference>
<dbReference type="NCBIfam" id="TIGR03263">
    <property type="entry name" value="guanyl_kin"/>
    <property type="match status" value="1"/>
</dbReference>
<dbReference type="PANTHER" id="PTHR23117:SF13">
    <property type="entry name" value="GUANYLATE KINASE"/>
    <property type="match status" value="1"/>
</dbReference>
<dbReference type="PANTHER" id="PTHR23117">
    <property type="entry name" value="GUANYLATE KINASE-RELATED"/>
    <property type="match status" value="1"/>
</dbReference>
<dbReference type="Pfam" id="PF00625">
    <property type="entry name" value="Guanylate_kin"/>
    <property type="match status" value="1"/>
</dbReference>
<dbReference type="SMART" id="SM00072">
    <property type="entry name" value="GuKc"/>
    <property type="match status" value="1"/>
</dbReference>
<dbReference type="SUPFAM" id="SSF52540">
    <property type="entry name" value="P-loop containing nucleoside triphosphate hydrolases"/>
    <property type="match status" value="1"/>
</dbReference>
<dbReference type="PROSITE" id="PS00856">
    <property type="entry name" value="GUANYLATE_KINASE_1"/>
    <property type="match status" value="1"/>
</dbReference>
<dbReference type="PROSITE" id="PS50052">
    <property type="entry name" value="GUANYLATE_KINASE_2"/>
    <property type="match status" value="1"/>
</dbReference>
<protein>
    <recommendedName>
        <fullName evidence="2">Guanylate kinase</fullName>
        <ecNumber evidence="2">2.7.4.8</ecNumber>
    </recommendedName>
    <alternativeName>
        <fullName evidence="2">GMP kinase</fullName>
    </alternativeName>
</protein>
<keyword id="KW-0067">ATP-binding</keyword>
<keyword id="KW-0963">Cytoplasm</keyword>
<keyword id="KW-0418">Kinase</keyword>
<keyword id="KW-0547">Nucleotide-binding</keyword>
<keyword id="KW-1185">Reference proteome</keyword>
<keyword id="KW-0808">Transferase</keyword>
<comment type="function">
    <text evidence="2">Essential for recycling GMP and indirectly, cGMP.</text>
</comment>
<comment type="function">
    <text evidence="1">(Microbial infection) Catalyzes the phosphorylation of dZMP to dZDP, when the bacterium is infected by a phage that produces the substrate for the synthesis of dZTP (2- amino-2'-deoxyadenosine 5'-triphosphate), which is then used by the phage as a DNA polymerase substrate.</text>
</comment>
<comment type="catalytic activity">
    <reaction evidence="2">
        <text>GMP + ATP = GDP + ADP</text>
        <dbReference type="Rhea" id="RHEA:20780"/>
        <dbReference type="ChEBI" id="CHEBI:30616"/>
        <dbReference type="ChEBI" id="CHEBI:58115"/>
        <dbReference type="ChEBI" id="CHEBI:58189"/>
        <dbReference type="ChEBI" id="CHEBI:456216"/>
        <dbReference type="EC" id="2.7.4.8"/>
    </reaction>
</comment>
<comment type="catalytic activity">
    <reaction evidence="1">
        <text>dZMP + ATP = dZDP + ADP</text>
        <dbReference type="Rhea" id="RHEA:67640"/>
        <dbReference type="ChEBI" id="CHEBI:30616"/>
        <dbReference type="ChEBI" id="CHEBI:172927"/>
        <dbReference type="ChEBI" id="CHEBI:172929"/>
        <dbReference type="ChEBI" id="CHEBI:456216"/>
    </reaction>
</comment>
<comment type="pathway">
    <text evidence="1">Purine metabolism.</text>
</comment>
<comment type="subcellular location">
    <subcellularLocation>
        <location evidence="2">Cytoplasm</location>
    </subcellularLocation>
</comment>
<comment type="similarity">
    <text evidence="2">Belongs to the guanylate kinase family.</text>
</comment>
<comment type="sequence caution" evidence="3">
    <conflict type="erroneous initiation">
        <sequence resource="EMBL-CDS" id="AAM82712"/>
    </conflict>
</comment>